<sequence length="281" mass="31330">MSKFLVKAPAKINLFLHILGKNSNYHSLESLLVFVNIYDILEVTIDAPRSGVYFTNLKINRYNNTITKVIYLLSQHSTSSVNVFVSVIKNILVSAGLAGGSADAAAVMRLLGNVWDIQPQVLEELALEIGSDVPACLHSKTLFARGRGEDILLLPDLCLPKYIVIVAPKGKPLSTVKVFNNYEPSAFSSPICDNLPVRQDDWLELIYNARNDLLDTALKFVPEIEEILFVLRKFRNCLIARMTGSGATCFALFNELSDAEVVVRELQMTRPDWIVFNAKIL</sequence>
<gene>
    <name evidence="1" type="primary">ispE</name>
    <name type="ordered locus">Erum3340</name>
    <name type="ordered locus">ERWE_CDS_03410</name>
</gene>
<name>ISPE_EHRRW</name>
<evidence type="ECO:0000255" key="1">
    <source>
        <dbReference type="HAMAP-Rule" id="MF_00061"/>
    </source>
</evidence>
<proteinExistence type="inferred from homology"/>
<organism>
    <name type="scientific">Ehrlichia ruminantium (strain Welgevonden)</name>
    <dbReference type="NCBI Taxonomy" id="254945"/>
    <lineage>
        <taxon>Bacteria</taxon>
        <taxon>Pseudomonadati</taxon>
        <taxon>Pseudomonadota</taxon>
        <taxon>Alphaproteobacteria</taxon>
        <taxon>Rickettsiales</taxon>
        <taxon>Anaplasmataceae</taxon>
        <taxon>Ehrlichia</taxon>
    </lineage>
</organism>
<protein>
    <recommendedName>
        <fullName evidence="1">4-diphosphocytidyl-2-C-methyl-D-erythritol kinase</fullName>
        <shortName evidence="1">CMK</shortName>
        <ecNumber evidence="1">2.7.1.148</ecNumber>
    </recommendedName>
    <alternativeName>
        <fullName evidence="1">4-(cytidine-5'-diphospho)-2-C-methyl-D-erythritol kinase</fullName>
    </alternativeName>
</protein>
<dbReference type="EC" id="2.7.1.148" evidence="1"/>
<dbReference type="EMBL" id="CR767821">
    <property type="protein sequence ID" value="CAH58054.1"/>
    <property type="molecule type" value="Genomic_DNA"/>
</dbReference>
<dbReference type="EMBL" id="CR925678">
    <property type="protein sequence ID" value="CAI26835.1"/>
    <property type="molecule type" value="Genomic_DNA"/>
</dbReference>
<dbReference type="RefSeq" id="WP_011155015.1">
    <property type="nucleotide sequence ID" value="NC_005295.2"/>
</dbReference>
<dbReference type="SMR" id="Q5HBJ6"/>
<dbReference type="GeneID" id="33057626"/>
<dbReference type="KEGG" id="eru:Erum3340"/>
<dbReference type="KEGG" id="erw:ERWE_CDS_03410"/>
<dbReference type="eggNOG" id="COG1947">
    <property type="taxonomic scope" value="Bacteria"/>
</dbReference>
<dbReference type="HOGENOM" id="CLU_053057_1_0_5"/>
<dbReference type="UniPathway" id="UPA00056">
    <property type="reaction ID" value="UER00094"/>
</dbReference>
<dbReference type="Proteomes" id="UP000001021">
    <property type="component" value="Chromosome"/>
</dbReference>
<dbReference type="GO" id="GO:0050515">
    <property type="term" value="F:4-(cytidine 5'-diphospho)-2-C-methyl-D-erythritol kinase activity"/>
    <property type="evidence" value="ECO:0007669"/>
    <property type="project" value="UniProtKB-UniRule"/>
</dbReference>
<dbReference type="GO" id="GO:0005524">
    <property type="term" value="F:ATP binding"/>
    <property type="evidence" value="ECO:0007669"/>
    <property type="project" value="UniProtKB-UniRule"/>
</dbReference>
<dbReference type="GO" id="GO:0019288">
    <property type="term" value="P:isopentenyl diphosphate biosynthetic process, methylerythritol 4-phosphate pathway"/>
    <property type="evidence" value="ECO:0007669"/>
    <property type="project" value="UniProtKB-UniRule"/>
</dbReference>
<dbReference type="GO" id="GO:0016114">
    <property type="term" value="P:terpenoid biosynthetic process"/>
    <property type="evidence" value="ECO:0007669"/>
    <property type="project" value="InterPro"/>
</dbReference>
<dbReference type="Gene3D" id="3.30.230.10">
    <property type="match status" value="1"/>
</dbReference>
<dbReference type="Gene3D" id="3.30.70.890">
    <property type="entry name" value="GHMP kinase, C-terminal domain"/>
    <property type="match status" value="1"/>
</dbReference>
<dbReference type="HAMAP" id="MF_00061">
    <property type="entry name" value="IspE"/>
    <property type="match status" value="1"/>
</dbReference>
<dbReference type="InterPro" id="IPR013750">
    <property type="entry name" value="GHMP_kinase_C_dom"/>
</dbReference>
<dbReference type="InterPro" id="IPR036554">
    <property type="entry name" value="GHMP_kinase_C_sf"/>
</dbReference>
<dbReference type="InterPro" id="IPR006204">
    <property type="entry name" value="GHMP_kinase_N_dom"/>
</dbReference>
<dbReference type="InterPro" id="IPR004424">
    <property type="entry name" value="IspE"/>
</dbReference>
<dbReference type="InterPro" id="IPR020568">
    <property type="entry name" value="Ribosomal_Su5_D2-typ_SF"/>
</dbReference>
<dbReference type="InterPro" id="IPR014721">
    <property type="entry name" value="Ribsml_uS5_D2-typ_fold_subgr"/>
</dbReference>
<dbReference type="NCBIfam" id="TIGR00154">
    <property type="entry name" value="ispE"/>
    <property type="match status" value="1"/>
</dbReference>
<dbReference type="NCBIfam" id="NF011202">
    <property type="entry name" value="PRK14608.1"/>
    <property type="match status" value="1"/>
</dbReference>
<dbReference type="PANTHER" id="PTHR43527">
    <property type="entry name" value="4-DIPHOSPHOCYTIDYL-2-C-METHYL-D-ERYTHRITOL KINASE, CHLOROPLASTIC"/>
    <property type="match status" value="1"/>
</dbReference>
<dbReference type="PANTHER" id="PTHR43527:SF2">
    <property type="entry name" value="4-DIPHOSPHOCYTIDYL-2-C-METHYL-D-ERYTHRITOL KINASE, CHLOROPLASTIC"/>
    <property type="match status" value="1"/>
</dbReference>
<dbReference type="Pfam" id="PF08544">
    <property type="entry name" value="GHMP_kinases_C"/>
    <property type="match status" value="1"/>
</dbReference>
<dbReference type="Pfam" id="PF00288">
    <property type="entry name" value="GHMP_kinases_N"/>
    <property type="match status" value="1"/>
</dbReference>
<dbReference type="PIRSF" id="PIRSF010376">
    <property type="entry name" value="IspE"/>
    <property type="match status" value="1"/>
</dbReference>
<dbReference type="SUPFAM" id="SSF55060">
    <property type="entry name" value="GHMP Kinase, C-terminal domain"/>
    <property type="match status" value="1"/>
</dbReference>
<dbReference type="SUPFAM" id="SSF54211">
    <property type="entry name" value="Ribosomal protein S5 domain 2-like"/>
    <property type="match status" value="1"/>
</dbReference>
<accession>Q5HBJ6</accession>
<accession>Q5FED5</accession>
<feature type="chain" id="PRO_0000235091" description="4-diphosphocytidyl-2-C-methyl-D-erythritol kinase">
    <location>
        <begin position="1"/>
        <end position="281"/>
    </location>
</feature>
<feature type="active site" evidence="1">
    <location>
        <position position="11"/>
    </location>
</feature>
<feature type="active site" evidence="1">
    <location>
        <position position="132"/>
    </location>
</feature>
<feature type="binding site" evidence="1">
    <location>
        <begin position="92"/>
        <end position="102"/>
    </location>
    <ligand>
        <name>ATP</name>
        <dbReference type="ChEBI" id="CHEBI:30616"/>
    </ligand>
</feature>
<reference key="1">
    <citation type="journal article" date="2005" name="Proc. Natl. Acad. Sci. U.S.A.">
        <title>The genome of the heartwater agent Ehrlichia ruminantium contains multiple tandem repeats of actively variable copy number.</title>
        <authorList>
            <person name="Collins N.E."/>
            <person name="Liebenberg J."/>
            <person name="de Villiers E.P."/>
            <person name="Brayton K.A."/>
            <person name="Louw E."/>
            <person name="Pretorius A."/>
            <person name="Faber F.E."/>
            <person name="van Heerden H."/>
            <person name="Josemans A."/>
            <person name="van Kleef M."/>
            <person name="Steyn H.C."/>
            <person name="van Strijp M.F."/>
            <person name="Zweygarth E."/>
            <person name="Jongejan F."/>
            <person name="Maillard J.C."/>
            <person name="Berthier D."/>
            <person name="Botha M."/>
            <person name="Joubert F."/>
            <person name="Corton C.H."/>
            <person name="Thomson N.R."/>
            <person name="Allsopp M.T."/>
            <person name="Allsopp B.A."/>
        </authorList>
    </citation>
    <scope>NUCLEOTIDE SEQUENCE [LARGE SCALE GENOMIC DNA]</scope>
    <source>
        <strain>Welgevonden</strain>
    </source>
</reference>
<reference key="2">
    <citation type="journal article" date="2006" name="J. Bacteriol.">
        <title>Comparative genomic analysis of three strains of Ehrlichia ruminantium reveals an active process of genome size plasticity.</title>
        <authorList>
            <person name="Frutos R."/>
            <person name="Viari A."/>
            <person name="Ferraz C."/>
            <person name="Morgat A."/>
            <person name="Eychenie S."/>
            <person name="Kandassamy Y."/>
            <person name="Chantal I."/>
            <person name="Bensaid A."/>
            <person name="Coissac E."/>
            <person name="Vachiery N."/>
            <person name="Demaille J."/>
            <person name="Martinez D."/>
        </authorList>
    </citation>
    <scope>NUCLEOTIDE SEQUENCE [LARGE SCALE GENOMIC DNA]</scope>
    <source>
        <strain>Welgevonden</strain>
    </source>
</reference>
<comment type="function">
    <text evidence="1">Catalyzes the phosphorylation of the position 2 hydroxy group of 4-diphosphocytidyl-2C-methyl-D-erythritol.</text>
</comment>
<comment type="catalytic activity">
    <reaction evidence="1">
        <text>4-CDP-2-C-methyl-D-erythritol + ATP = 4-CDP-2-C-methyl-D-erythritol 2-phosphate + ADP + H(+)</text>
        <dbReference type="Rhea" id="RHEA:18437"/>
        <dbReference type="ChEBI" id="CHEBI:15378"/>
        <dbReference type="ChEBI" id="CHEBI:30616"/>
        <dbReference type="ChEBI" id="CHEBI:57823"/>
        <dbReference type="ChEBI" id="CHEBI:57919"/>
        <dbReference type="ChEBI" id="CHEBI:456216"/>
        <dbReference type="EC" id="2.7.1.148"/>
    </reaction>
</comment>
<comment type="pathway">
    <text evidence="1">Isoprenoid biosynthesis; isopentenyl diphosphate biosynthesis via DXP pathway; isopentenyl diphosphate from 1-deoxy-D-xylulose 5-phosphate: step 3/6.</text>
</comment>
<comment type="similarity">
    <text evidence="1">Belongs to the GHMP kinase family. IspE subfamily.</text>
</comment>
<keyword id="KW-0067">ATP-binding</keyword>
<keyword id="KW-0414">Isoprene biosynthesis</keyword>
<keyword id="KW-0418">Kinase</keyword>
<keyword id="KW-0547">Nucleotide-binding</keyword>
<keyword id="KW-0808">Transferase</keyword>